<comment type="function">
    <text>Component of the sequence-specific heterotrimeric transcription factor (NF-Y) which specifically recognizes a 5'-CCAAT-3' box motif found in the promoters of its target genes. NF-Y can function as both an activator and a repressor, depending on its interacting cofactors. NF-YA positively regulates the transcription of the core clock component BMAL1.</text>
</comment>
<comment type="subunit">
    <text evidence="1">Heterotrimeric transcription factor composed of three components, NF-YA, NF-YB and NF-YC. NF-YB and NF-YC must interact and dimerize for NF-YA association and DNA binding (By similarity). Interacts with SP1; the interaction is inhibited by glycosylation of SP1. Interacts (via N-terminus) with ZHX2 (via homeobox domain). Interacts with ZFX3. Interacts with ZHX1 (By similarity).</text>
</comment>
<comment type="interaction">
    <interactant intactId="EBI-862695">
        <id>P18576</id>
    </interactant>
    <interactant intactId="EBI-862787">
        <id>Q01714</id>
        <label>Sp1</label>
    </interactant>
    <organismsDiffer>false</organismsDiffer>
    <experiments>2</experiments>
</comment>
<comment type="subcellular location">
    <subcellularLocation>
        <location>Nucleus</location>
    </subcellularLocation>
</comment>
<comment type="similarity">
    <text evidence="2">Belongs to the NFYA/HAP2 subunit family.</text>
</comment>
<name>NFYA_RAT</name>
<proteinExistence type="evidence at protein level"/>
<dbReference type="EMBL" id="M34238">
    <property type="protein sequence ID" value="AAA40889.1"/>
    <property type="molecule type" value="mRNA"/>
</dbReference>
<dbReference type="PIR" id="A35777">
    <property type="entry name" value="A35777"/>
</dbReference>
<dbReference type="RefSeq" id="NP_036997.1">
    <property type="nucleotide sequence ID" value="NM_012865.3"/>
</dbReference>
<dbReference type="SMR" id="P18576"/>
<dbReference type="BioGRID" id="248146">
    <property type="interactions" value="1"/>
</dbReference>
<dbReference type="FunCoup" id="P18576">
    <property type="interactions" value="3557"/>
</dbReference>
<dbReference type="IntAct" id="P18576">
    <property type="interactions" value="2"/>
</dbReference>
<dbReference type="MINT" id="P18576"/>
<dbReference type="STRING" id="10116.ENSRNOP00000075707"/>
<dbReference type="GlyGen" id="P18576">
    <property type="glycosylation" value="1 site"/>
</dbReference>
<dbReference type="iPTMnet" id="P18576"/>
<dbReference type="PhosphoSitePlus" id="P18576"/>
<dbReference type="PaxDb" id="10116-ENSRNOP00000017157"/>
<dbReference type="GeneID" id="29508"/>
<dbReference type="KEGG" id="rno:29508"/>
<dbReference type="UCSC" id="RGD:70976">
    <property type="organism name" value="rat"/>
</dbReference>
<dbReference type="AGR" id="RGD:70976"/>
<dbReference type="CTD" id="4800"/>
<dbReference type="RGD" id="70976">
    <property type="gene designation" value="Nfya"/>
</dbReference>
<dbReference type="VEuPathDB" id="HostDB:ENSRNOG00000012702"/>
<dbReference type="eggNOG" id="KOG1561">
    <property type="taxonomic scope" value="Eukaryota"/>
</dbReference>
<dbReference type="HOGENOM" id="CLU_071609_1_0_1"/>
<dbReference type="InParanoid" id="P18576"/>
<dbReference type="PhylomeDB" id="P18576"/>
<dbReference type="PRO" id="PR:P18576"/>
<dbReference type="Proteomes" id="UP000002494">
    <property type="component" value="Chromosome 9"/>
</dbReference>
<dbReference type="Bgee" id="ENSRNOG00000012702">
    <property type="expression patterns" value="Expressed in thymus and 20 other cell types or tissues"/>
</dbReference>
<dbReference type="ExpressionAtlas" id="P18576">
    <property type="expression patterns" value="baseline and differential"/>
</dbReference>
<dbReference type="GO" id="GO:0016602">
    <property type="term" value="C:CCAAT-binding factor complex"/>
    <property type="evidence" value="ECO:0000314"/>
    <property type="project" value="RGD"/>
</dbReference>
<dbReference type="GO" id="GO:0005654">
    <property type="term" value="C:nucleoplasm"/>
    <property type="evidence" value="ECO:0000304"/>
    <property type="project" value="Reactome"/>
</dbReference>
<dbReference type="GO" id="GO:0005634">
    <property type="term" value="C:nucleus"/>
    <property type="evidence" value="ECO:0000266"/>
    <property type="project" value="RGD"/>
</dbReference>
<dbReference type="GO" id="GO:0032993">
    <property type="term" value="C:protein-DNA complex"/>
    <property type="evidence" value="ECO:0000266"/>
    <property type="project" value="RGD"/>
</dbReference>
<dbReference type="GO" id="GO:0090575">
    <property type="term" value="C:RNA polymerase II transcription regulator complex"/>
    <property type="evidence" value="ECO:0000266"/>
    <property type="project" value="RGD"/>
</dbReference>
<dbReference type="GO" id="GO:0003677">
    <property type="term" value="F:DNA binding"/>
    <property type="evidence" value="ECO:0000266"/>
    <property type="project" value="RGD"/>
</dbReference>
<dbReference type="GO" id="GO:0001228">
    <property type="term" value="F:DNA-binding transcription activator activity, RNA polymerase II-specific"/>
    <property type="evidence" value="ECO:0000266"/>
    <property type="project" value="RGD"/>
</dbReference>
<dbReference type="GO" id="GO:0003700">
    <property type="term" value="F:DNA-binding transcription factor activity"/>
    <property type="evidence" value="ECO:0000266"/>
    <property type="project" value="RGD"/>
</dbReference>
<dbReference type="GO" id="GO:0000981">
    <property type="term" value="F:DNA-binding transcription factor activity, RNA polymerase II-specific"/>
    <property type="evidence" value="ECO:0000318"/>
    <property type="project" value="GO_Central"/>
</dbReference>
<dbReference type="GO" id="GO:0000978">
    <property type="term" value="F:RNA polymerase II cis-regulatory region sequence-specific DNA binding"/>
    <property type="evidence" value="ECO:0000250"/>
    <property type="project" value="UniProtKB"/>
</dbReference>
<dbReference type="GO" id="GO:0043565">
    <property type="term" value="F:sequence-specific DNA binding"/>
    <property type="evidence" value="ECO:0000266"/>
    <property type="project" value="RGD"/>
</dbReference>
<dbReference type="GO" id="GO:0001221">
    <property type="term" value="F:transcription coregulator binding"/>
    <property type="evidence" value="ECO:0000353"/>
    <property type="project" value="RGD"/>
</dbReference>
<dbReference type="GO" id="GO:0045893">
    <property type="term" value="P:positive regulation of DNA-templated transcription"/>
    <property type="evidence" value="ECO:0000250"/>
    <property type="project" value="UniProtKB"/>
</dbReference>
<dbReference type="GO" id="GO:0045944">
    <property type="term" value="P:positive regulation of transcription by RNA polymerase II"/>
    <property type="evidence" value="ECO:0000266"/>
    <property type="project" value="RGD"/>
</dbReference>
<dbReference type="GO" id="GO:0006355">
    <property type="term" value="P:regulation of DNA-templated transcription"/>
    <property type="evidence" value="ECO:0000266"/>
    <property type="project" value="RGD"/>
</dbReference>
<dbReference type="GO" id="GO:0006357">
    <property type="term" value="P:regulation of transcription by RNA polymerase II"/>
    <property type="evidence" value="ECO:0000318"/>
    <property type="project" value="GO_Central"/>
</dbReference>
<dbReference type="GO" id="GO:0048511">
    <property type="term" value="P:rhythmic process"/>
    <property type="evidence" value="ECO:0007669"/>
    <property type="project" value="UniProtKB-KW"/>
</dbReference>
<dbReference type="GO" id="GO:0006366">
    <property type="term" value="P:transcription by RNA polymerase II"/>
    <property type="evidence" value="ECO:0000305"/>
    <property type="project" value="RGD"/>
</dbReference>
<dbReference type="Gene3D" id="6.10.250.2430">
    <property type="match status" value="1"/>
</dbReference>
<dbReference type="InterPro" id="IPR018362">
    <property type="entry name" value="CCAAT-binding_factor_CS"/>
</dbReference>
<dbReference type="InterPro" id="IPR001289">
    <property type="entry name" value="NFYA"/>
</dbReference>
<dbReference type="PANTHER" id="PTHR12632">
    <property type="entry name" value="TRANSCRIPTION FACTOR NF-Y ALPHA-RELATED"/>
    <property type="match status" value="1"/>
</dbReference>
<dbReference type="Pfam" id="PF02045">
    <property type="entry name" value="CBFB_NFYA"/>
    <property type="match status" value="1"/>
</dbReference>
<dbReference type="PRINTS" id="PR00616">
    <property type="entry name" value="CCAATSUBUNTB"/>
</dbReference>
<dbReference type="SMART" id="SM00521">
    <property type="entry name" value="CBF"/>
    <property type="match status" value="1"/>
</dbReference>
<dbReference type="PROSITE" id="PS00686">
    <property type="entry name" value="NFYA_HAP2_1"/>
    <property type="match status" value="1"/>
</dbReference>
<dbReference type="PROSITE" id="PS51152">
    <property type="entry name" value="NFYA_HAP2_2"/>
    <property type="match status" value="1"/>
</dbReference>
<protein>
    <recommendedName>
        <fullName>Nuclear transcription factor Y subunit alpha</fullName>
    </recommendedName>
    <alternativeName>
        <fullName>CAAT box DNA-binding protein subunit A</fullName>
    </alternativeName>
    <alternativeName>
        <fullName>CCAAT-binding transcription factor subunit A</fullName>
        <shortName>CBF-A</shortName>
    </alternativeName>
    <alternativeName>
        <fullName>Nuclear transcription factor Y subunit A</fullName>
        <shortName>NF-YA</shortName>
    </alternativeName>
</protein>
<feature type="chain" id="PRO_0000198770" description="Nuclear transcription factor Y subunit alpha">
    <location>
        <begin position="1"/>
        <end position="341"/>
    </location>
</feature>
<feature type="DNA-binding region" description="NFYA/HAP2-type" evidence="2">
    <location>
        <begin position="290"/>
        <end position="315"/>
    </location>
</feature>
<feature type="region of interest" description="Disordered" evidence="3">
    <location>
        <begin position="294"/>
        <end position="341"/>
    </location>
</feature>
<feature type="short sequence motif" description="Subunit association domain (SAD)">
    <location>
        <begin position="260"/>
        <end position="283"/>
    </location>
</feature>
<feature type="compositionally biased region" description="Basic residues" evidence="3">
    <location>
        <begin position="294"/>
        <end position="304"/>
    </location>
</feature>
<feature type="compositionally biased region" description="Basic and acidic residues" evidence="3">
    <location>
        <begin position="305"/>
        <end position="322"/>
    </location>
</feature>
<feature type="modified residue" description="Phosphoserine" evidence="4">
    <location>
        <position position="320"/>
    </location>
</feature>
<accession>P18576</accession>
<gene>
    <name type="primary">Nfya</name>
</gene>
<sequence>MEQYTANSNSSTEQIVVQAGQIQQQQQGGVTAVQLQTEAQVASASGQQVQTLQVVQGQPLMVQVSGGQLITSTGQPIMVQAVPGGQGQTIMQVPVSGTQGLQQIQLVPPGQIQIQGGQAVQVQGQQGQTQQIIIQQPQTAVTAGQTQTQQQIAVQGQQVAQTAEGQTIVYQPVNADGTILQQGMITIPAASLAGAQIVQTGANTNTTSSGQGTVTVTLPVAGNVVNSGGMVMMVPGAGSVPAIQRIPLPGAEMLEEEPLYVNAKQYHRILKRRQARAKLEAEGKIPKERRKYLHESRHRHAMARKRGEGGRFFSPKEKDSPHMQDPNQADEEAMTQIIRVS</sequence>
<reference key="1">
    <citation type="journal article" date="1990" name="Proc. Natl. Acad. Sci. U.S.A.">
        <title>The B subunit of a rat heteromeric CCAAT-binding transcription factor shows a striking sequence identity with the yeast Hap2 transcription factor.</title>
        <authorList>
            <person name="Maity S.N."/>
            <person name="Vuorio T."/>
            <person name="de Crombrugghe B."/>
        </authorList>
    </citation>
    <scope>NUCLEOTIDE SEQUENCE [MRNA]</scope>
    <scope>PARTIAL PROTEIN SEQUENCE</scope>
    <source>
        <strain>Sprague-Dawley</strain>
    </source>
</reference>
<reference key="2">
    <citation type="journal article" date="1992" name="J. Biol. Chem.">
        <title>Biochemical analysis of the B subunit of the heteromeric CCAAT-binding factor. A DNA-binding domain and a subunit interaction domain are specified by two separate segments.</title>
        <authorList>
            <person name="Maity S.N."/>
            <person name="de Crombrugghe B."/>
        </authorList>
    </citation>
    <scope>DOMAINS</scope>
</reference>
<reference key="3">
    <citation type="journal article" date="2012" name="Nat. Commun.">
        <title>Quantitative maps of protein phosphorylation sites across 14 different rat organs and tissues.</title>
        <authorList>
            <person name="Lundby A."/>
            <person name="Secher A."/>
            <person name="Lage K."/>
            <person name="Nordsborg N.B."/>
            <person name="Dmytriyev A."/>
            <person name="Lundby C."/>
            <person name="Olsen J.V."/>
        </authorList>
    </citation>
    <scope>PHOSPHORYLATION [LARGE SCALE ANALYSIS] AT SER-320</scope>
    <scope>IDENTIFICATION BY MASS SPECTROMETRY [LARGE SCALE ANALYSIS]</scope>
</reference>
<keyword id="KW-0010">Activator</keyword>
<keyword id="KW-0090">Biological rhythms</keyword>
<keyword id="KW-0903">Direct protein sequencing</keyword>
<keyword id="KW-0238">DNA-binding</keyword>
<keyword id="KW-0539">Nucleus</keyword>
<keyword id="KW-0597">Phosphoprotein</keyword>
<keyword id="KW-1185">Reference proteome</keyword>
<keyword id="KW-0804">Transcription</keyword>
<keyword id="KW-0805">Transcription regulation</keyword>
<evidence type="ECO:0000250" key="1"/>
<evidence type="ECO:0000255" key="2">
    <source>
        <dbReference type="PROSITE-ProRule" id="PRU00966"/>
    </source>
</evidence>
<evidence type="ECO:0000256" key="3">
    <source>
        <dbReference type="SAM" id="MobiDB-lite"/>
    </source>
</evidence>
<evidence type="ECO:0007744" key="4">
    <source>
    </source>
</evidence>
<organism>
    <name type="scientific">Rattus norvegicus</name>
    <name type="common">Rat</name>
    <dbReference type="NCBI Taxonomy" id="10116"/>
    <lineage>
        <taxon>Eukaryota</taxon>
        <taxon>Metazoa</taxon>
        <taxon>Chordata</taxon>
        <taxon>Craniata</taxon>
        <taxon>Vertebrata</taxon>
        <taxon>Euteleostomi</taxon>
        <taxon>Mammalia</taxon>
        <taxon>Eutheria</taxon>
        <taxon>Euarchontoglires</taxon>
        <taxon>Glires</taxon>
        <taxon>Rodentia</taxon>
        <taxon>Myomorpha</taxon>
        <taxon>Muroidea</taxon>
        <taxon>Muridae</taxon>
        <taxon>Murinae</taxon>
        <taxon>Rattus</taxon>
    </lineage>
</organism>